<keyword id="KW-0044">Antibiotic</keyword>
<keyword id="KW-0929">Antimicrobial</keyword>
<keyword id="KW-0903">Direct protein sequencing</keyword>
<keyword id="KW-0295">Fungicide</keyword>
<keyword id="KW-0611">Plant defense</keyword>
<keyword id="KW-1185">Reference proteome</keyword>
<keyword id="KW-0964">Secreted</keyword>
<feature type="peptide" id="PRO_0000044778" description="Antimicrobial peptide MBP-1">
    <location>
        <begin position="1"/>
        <end position="33"/>
    </location>
</feature>
<accession>P28794</accession>
<protein>
    <recommendedName>
        <fullName>Antimicrobial peptide MBP-1</fullName>
    </recommendedName>
</protein>
<sequence>RSGRGECRRQCLRRHEGQPWETQECMRRCRRRG</sequence>
<reference key="1">
    <citation type="journal article" date="1992" name="J. Biol. Chem.">
        <title>Purification and characterization of a novel antimicrobial peptide from maize (Zea mays L.) kernels.</title>
        <authorList>
            <person name="Duvick J.P."/>
            <person name="Rood T."/>
            <person name="Rao A.G."/>
            <person name="Marshak D.R."/>
        </authorList>
    </citation>
    <scope>PROTEIN SEQUENCE</scope>
    <source>
        <strain>cv. B73</strain>
        <tissue>Seed</tissue>
    </source>
</reference>
<comment type="function">
    <text>Inhibitor of both bacterial and fungal growth in vitro.</text>
</comment>
<comment type="subcellular location">
    <subcellularLocation>
        <location>Secreted</location>
    </subcellularLocation>
</comment>
<comment type="tissue specificity">
    <text>Predominantly in the embryo portion of the kernel.</text>
</comment>
<organism>
    <name type="scientific">Zea mays</name>
    <name type="common">Maize</name>
    <dbReference type="NCBI Taxonomy" id="4577"/>
    <lineage>
        <taxon>Eukaryota</taxon>
        <taxon>Viridiplantae</taxon>
        <taxon>Streptophyta</taxon>
        <taxon>Embryophyta</taxon>
        <taxon>Tracheophyta</taxon>
        <taxon>Spermatophyta</taxon>
        <taxon>Magnoliopsida</taxon>
        <taxon>Liliopsida</taxon>
        <taxon>Poales</taxon>
        <taxon>Poaceae</taxon>
        <taxon>PACMAD clade</taxon>
        <taxon>Panicoideae</taxon>
        <taxon>Andropogonodae</taxon>
        <taxon>Andropogoneae</taxon>
        <taxon>Tripsacinae</taxon>
        <taxon>Zea</taxon>
    </lineage>
</organism>
<name>MBP1_MAIZE</name>
<dbReference type="PIR" id="A41822">
    <property type="entry name" value="A41822"/>
</dbReference>
<dbReference type="SMR" id="P28794"/>
<dbReference type="PaxDb" id="4577-GRMZM2G325118_P01"/>
<dbReference type="MaizeGDB" id="69182"/>
<dbReference type="eggNOG" id="ENOG502R3DT">
    <property type="taxonomic scope" value="Eukaryota"/>
</dbReference>
<dbReference type="InParanoid" id="P28794"/>
<dbReference type="Proteomes" id="UP000007305">
    <property type="component" value="Unplaced"/>
</dbReference>
<dbReference type="GO" id="GO:0005576">
    <property type="term" value="C:extracellular region"/>
    <property type="evidence" value="ECO:0007669"/>
    <property type="project" value="UniProtKB-SubCell"/>
</dbReference>
<dbReference type="GO" id="GO:0042742">
    <property type="term" value="P:defense response to bacterium"/>
    <property type="evidence" value="ECO:0007669"/>
    <property type="project" value="UniProtKB-KW"/>
</dbReference>
<dbReference type="GO" id="GO:0050832">
    <property type="term" value="P:defense response to fungus"/>
    <property type="evidence" value="ECO:0007669"/>
    <property type="project" value="UniProtKB-KW"/>
</dbReference>
<dbReference type="GO" id="GO:0031640">
    <property type="term" value="P:killing of cells of another organism"/>
    <property type="evidence" value="ECO:0007669"/>
    <property type="project" value="UniProtKB-KW"/>
</dbReference>
<dbReference type="InterPro" id="IPR029227">
    <property type="entry name" value="Plant_Antimicrobial"/>
</dbReference>
<dbReference type="Pfam" id="PF14861">
    <property type="entry name" value="Antimicrobial21"/>
    <property type="match status" value="1"/>
</dbReference>
<dbReference type="SMART" id="SM01357">
    <property type="entry name" value="Antimicrobial21"/>
    <property type="match status" value="1"/>
</dbReference>
<proteinExistence type="evidence at protein level"/>